<dbReference type="EC" id="4.1.1.112" evidence="1"/>
<dbReference type="EMBL" id="CP000076">
    <property type="protein sequence ID" value="AAY91728.1"/>
    <property type="molecule type" value="Genomic_DNA"/>
</dbReference>
<dbReference type="RefSeq" id="WP_011060752.1">
    <property type="nucleotide sequence ID" value="NC_004129.6"/>
</dbReference>
<dbReference type="SMR" id="Q4KDX1"/>
<dbReference type="STRING" id="220664.PFL_2455"/>
<dbReference type="KEGG" id="pfl:PFL_2455"/>
<dbReference type="PATRIC" id="fig|220664.5.peg.2499"/>
<dbReference type="eggNOG" id="COG2513">
    <property type="taxonomic scope" value="Bacteria"/>
</dbReference>
<dbReference type="HOGENOM" id="CLU_027389_3_2_6"/>
<dbReference type="Proteomes" id="UP000008540">
    <property type="component" value="Chromosome"/>
</dbReference>
<dbReference type="GO" id="GO:0000287">
    <property type="term" value="F:magnesium ion binding"/>
    <property type="evidence" value="ECO:0007669"/>
    <property type="project" value="UniProtKB-UniRule"/>
</dbReference>
<dbReference type="GO" id="GO:0046421">
    <property type="term" value="F:methylisocitrate lyase activity"/>
    <property type="evidence" value="ECO:0007669"/>
    <property type="project" value="TreeGrafter"/>
</dbReference>
<dbReference type="GO" id="GO:0008948">
    <property type="term" value="F:oxaloacetate decarboxylase activity"/>
    <property type="evidence" value="ECO:0007669"/>
    <property type="project" value="UniProtKB-UniRule"/>
</dbReference>
<dbReference type="GO" id="GO:0006107">
    <property type="term" value="P:oxaloacetate metabolic process"/>
    <property type="evidence" value="ECO:0007669"/>
    <property type="project" value="UniProtKB-UniRule"/>
</dbReference>
<dbReference type="GO" id="GO:0019629">
    <property type="term" value="P:propionate catabolic process, 2-methylcitrate cycle"/>
    <property type="evidence" value="ECO:0007669"/>
    <property type="project" value="TreeGrafter"/>
</dbReference>
<dbReference type="GO" id="GO:0042866">
    <property type="term" value="P:pyruvate biosynthetic process"/>
    <property type="evidence" value="ECO:0007669"/>
    <property type="project" value="UniProtKB-UniRule"/>
</dbReference>
<dbReference type="CDD" id="cd00377">
    <property type="entry name" value="ICL_PEPM"/>
    <property type="match status" value="1"/>
</dbReference>
<dbReference type="FunFam" id="3.20.20.60:FF:000015">
    <property type="entry name" value="Oxaloacetate decarboxylase"/>
    <property type="match status" value="1"/>
</dbReference>
<dbReference type="Gene3D" id="3.20.20.60">
    <property type="entry name" value="Phosphoenolpyruvate-binding domains"/>
    <property type="match status" value="1"/>
</dbReference>
<dbReference type="HAMAP" id="MF_01299">
    <property type="entry name" value="OadC"/>
    <property type="match status" value="1"/>
</dbReference>
<dbReference type="InterPro" id="IPR039556">
    <property type="entry name" value="ICL/PEPM"/>
</dbReference>
<dbReference type="InterPro" id="IPR023687">
    <property type="entry name" value="Oxaloacetate_deCOase_bac"/>
</dbReference>
<dbReference type="InterPro" id="IPR015813">
    <property type="entry name" value="Pyrv/PenolPyrv_kinase-like_dom"/>
</dbReference>
<dbReference type="InterPro" id="IPR040442">
    <property type="entry name" value="Pyrv_kinase-like_dom_sf"/>
</dbReference>
<dbReference type="PANTHER" id="PTHR42905:SF3">
    <property type="entry name" value="OXALOACETATE DECARBOXYLASE"/>
    <property type="match status" value="1"/>
</dbReference>
<dbReference type="PANTHER" id="PTHR42905">
    <property type="entry name" value="PHOSPHOENOLPYRUVATE CARBOXYLASE"/>
    <property type="match status" value="1"/>
</dbReference>
<dbReference type="Pfam" id="PF13714">
    <property type="entry name" value="PEP_mutase"/>
    <property type="match status" value="1"/>
</dbReference>
<dbReference type="SUPFAM" id="SSF51621">
    <property type="entry name" value="Phosphoenolpyruvate/pyruvate domain"/>
    <property type="match status" value="1"/>
</dbReference>
<comment type="function">
    <text evidence="1">Catalyzes the decarboxylation of oxaloacetate into pyruvate. Seems to play a role in maintaining cellular concentrations of bicarbonate and pyruvate.</text>
</comment>
<comment type="catalytic activity">
    <reaction evidence="1">
        <text>oxaloacetate + H(+) = pyruvate + CO2</text>
        <dbReference type="Rhea" id="RHEA:15641"/>
        <dbReference type="ChEBI" id="CHEBI:15361"/>
        <dbReference type="ChEBI" id="CHEBI:15378"/>
        <dbReference type="ChEBI" id="CHEBI:16452"/>
        <dbReference type="ChEBI" id="CHEBI:16526"/>
        <dbReference type="EC" id="4.1.1.112"/>
    </reaction>
</comment>
<comment type="cofactor">
    <cofactor evidence="1">
        <name>Mg(2+)</name>
        <dbReference type="ChEBI" id="CHEBI:18420"/>
    </cofactor>
    <text evidence="1">Binds 1 Mg(2+) ion per subunit.</text>
</comment>
<comment type="subunit">
    <text evidence="1">Homotetramer; dimer of dimers.</text>
</comment>
<comment type="similarity">
    <text evidence="2">Belongs to the isocitrate lyase/PEP mutase superfamily. Oxaloacetate decarboxylase family.</text>
</comment>
<keyword id="KW-0210">Decarboxylase</keyword>
<keyword id="KW-0456">Lyase</keyword>
<keyword id="KW-0460">Magnesium</keyword>
<keyword id="KW-0479">Metal-binding</keyword>
<reference key="1">
    <citation type="journal article" date="2005" name="Nat. Biotechnol.">
        <title>Complete genome sequence of the plant commensal Pseudomonas fluorescens Pf-5.</title>
        <authorList>
            <person name="Paulsen I.T."/>
            <person name="Press C.M."/>
            <person name="Ravel J."/>
            <person name="Kobayashi D.Y."/>
            <person name="Myers G.S.A."/>
            <person name="Mavrodi D.V."/>
            <person name="DeBoy R.T."/>
            <person name="Seshadri R."/>
            <person name="Ren Q."/>
            <person name="Madupu R."/>
            <person name="Dodson R.J."/>
            <person name="Durkin A.S."/>
            <person name="Brinkac L.M."/>
            <person name="Daugherty S.C."/>
            <person name="Sullivan S.A."/>
            <person name="Rosovitz M.J."/>
            <person name="Gwinn M.L."/>
            <person name="Zhou L."/>
            <person name="Schneider D.J."/>
            <person name="Cartinhour S.W."/>
            <person name="Nelson W.C."/>
            <person name="Weidman J."/>
            <person name="Watkins K."/>
            <person name="Tran K."/>
            <person name="Khouri H."/>
            <person name="Pierson E.A."/>
            <person name="Pierson L.S. III"/>
            <person name="Thomashow L.S."/>
            <person name="Loper J.E."/>
        </authorList>
    </citation>
    <scope>NUCLEOTIDE SEQUENCE [LARGE SCALE GENOMIC DNA]</scope>
    <source>
        <strain>ATCC BAA-477 / NRRL B-23932 / Pf-5</strain>
    </source>
</reference>
<feature type="chain" id="PRO_0000364062" description="Oxaloacetate decarboxylase">
    <location>
        <begin position="1"/>
        <end position="289"/>
    </location>
</feature>
<feature type="binding site" evidence="1">
    <location>
        <position position="50"/>
    </location>
    <ligand>
        <name>substrate</name>
    </ligand>
</feature>
<feature type="binding site" evidence="1">
    <location>
        <position position="88"/>
    </location>
    <ligand>
        <name>Mg(2+)</name>
        <dbReference type="ChEBI" id="CHEBI:18420"/>
    </ligand>
</feature>
<feature type="binding site" evidence="1">
    <location>
        <position position="159"/>
    </location>
    <ligand>
        <name>substrate</name>
    </ligand>
</feature>
<feature type="binding site" evidence="1">
    <location>
        <position position="235"/>
    </location>
    <ligand>
        <name>substrate</name>
    </ligand>
</feature>
<accession>Q4KDX1</accession>
<proteinExistence type="inferred from homology"/>
<evidence type="ECO:0000255" key="1">
    <source>
        <dbReference type="HAMAP-Rule" id="MF_01299"/>
    </source>
</evidence>
<evidence type="ECO:0000305" key="2"/>
<gene>
    <name type="ordered locus">PFL_2455</name>
</gene>
<sequence length="289" mass="31477">MSRLSHQDLRRGFRELIASNSCYHTASVFDPMSARIAADLGFEVGILGGSVASLQVLAAPDFALITLSEFAEQATRIGRVAQLPVIADADHGYGNALNVMRTVVELERAGIAALTIEDTLLPAQFGRKSTDLISVAEGVGKIRAALEARVDPELAIIARTNAGILPVQEIISRTQQYERAGADAICMVGIRDFEQLEQISEHLSVPLMLVTYGNPALRDDARLAELGVKIAVDGHAAYFAAIKATYDCLREQRQIFTQASDLSATELAHTYTQPEEYIVWAKEFMSVKE</sequence>
<organism>
    <name type="scientific">Pseudomonas fluorescens (strain ATCC BAA-477 / NRRL B-23932 / Pf-5)</name>
    <dbReference type="NCBI Taxonomy" id="220664"/>
    <lineage>
        <taxon>Bacteria</taxon>
        <taxon>Pseudomonadati</taxon>
        <taxon>Pseudomonadota</taxon>
        <taxon>Gammaproteobacteria</taxon>
        <taxon>Pseudomonadales</taxon>
        <taxon>Pseudomonadaceae</taxon>
        <taxon>Pseudomonas</taxon>
    </lineage>
</organism>
<name>OADC_PSEF5</name>
<protein>
    <recommendedName>
        <fullName evidence="1">Oxaloacetate decarboxylase</fullName>
        <ecNumber evidence="1">4.1.1.112</ecNumber>
    </recommendedName>
</protein>